<feature type="chain" id="PRO_1000199224" description="Leucine--tRNA ligase">
    <location>
        <begin position="1"/>
        <end position="833"/>
    </location>
</feature>
<feature type="short sequence motif" description="'HIGH' region">
    <location>
        <begin position="41"/>
        <end position="52"/>
    </location>
</feature>
<feature type="short sequence motif" description="'KMSKS' region">
    <location>
        <begin position="610"/>
        <end position="614"/>
    </location>
</feature>
<feature type="binding site" evidence="1">
    <location>
        <position position="613"/>
    </location>
    <ligand>
        <name>ATP</name>
        <dbReference type="ChEBI" id="CHEBI:30616"/>
    </ligand>
</feature>
<gene>
    <name evidence="1" type="primary">leuS</name>
    <name type="ordered locus">SEQ_0234</name>
</gene>
<keyword id="KW-0030">Aminoacyl-tRNA synthetase</keyword>
<keyword id="KW-0067">ATP-binding</keyword>
<keyword id="KW-0963">Cytoplasm</keyword>
<keyword id="KW-0436">Ligase</keyword>
<keyword id="KW-0547">Nucleotide-binding</keyword>
<keyword id="KW-0648">Protein biosynthesis</keyword>
<organism>
    <name type="scientific">Streptococcus equi subsp. equi (strain 4047)</name>
    <dbReference type="NCBI Taxonomy" id="553482"/>
    <lineage>
        <taxon>Bacteria</taxon>
        <taxon>Bacillati</taxon>
        <taxon>Bacillota</taxon>
        <taxon>Bacilli</taxon>
        <taxon>Lactobacillales</taxon>
        <taxon>Streptococcaceae</taxon>
        <taxon>Streptococcus</taxon>
    </lineage>
</organism>
<name>SYL_STRE4</name>
<comment type="catalytic activity">
    <reaction evidence="1">
        <text>tRNA(Leu) + L-leucine + ATP = L-leucyl-tRNA(Leu) + AMP + diphosphate</text>
        <dbReference type="Rhea" id="RHEA:11688"/>
        <dbReference type="Rhea" id="RHEA-COMP:9613"/>
        <dbReference type="Rhea" id="RHEA-COMP:9622"/>
        <dbReference type="ChEBI" id="CHEBI:30616"/>
        <dbReference type="ChEBI" id="CHEBI:33019"/>
        <dbReference type="ChEBI" id="CHEBI:57427"/>
        <dbReference type="ChEBI" id="CHEBI:78442"/>
        <dbReference type="ChEBI" id="CHEBI:78494"/>
        <dbReference type="ChEBI" id="CHEBI:456215"/>
        <dbReference type="EC" id="6.1.1.4"/>
    </reaction>
</comment>
<comment type="subcellular location">
    <subcellularLocation>
        <location evidence="1">Cytoplasm</location>
    </subcellularLocation>
</comment>
<comment type="similarity">
    <text evidence="1">Belongs to the class-I aminoacyl-tRNA synthetase family.</text>
</comment>
<sequence length="833" mass="93821">MTFYNHKAIEPKWQAFWADNHTFKTGTDASKPKFYALDMFPYPSGAGLHVGHPEGYTATDILSRFKRAQGYNVLHPMGWDAFGLPAEQYAMDTGNDPAEFTAENIANFKRQINALGFSYDWDREINTTDPSYYKWTQWIFTKLYEKGLAYEAEVPVNWVEELGTAIANEEVLPDGTSERGGYPVVRKPMRQWMLKITAYAERLLADLEEVDWPESIKDMQRNWIGKSTGANVTFKVKDTDKDFTVFTTRPDTLFGATYAVLAPEHALVDSITTAEQAQAVAEYKRQASLKSDLARTDLAKEKTGVWTGAYAINPVNGKEMPIWIADYVLASYGTGAIMAVPAHDERDWAFAKQFNLEIIPVLEGGNVDEAAYTEDGIHINSDFLDGLDKACAIAKMVAWLEETGVGHEKVSYRLRDWLFSRQRYWGEPIPIIHWEDGTSTAVPEQDLPLVLPVTKDIRPSGTGESPLANLTDWLEVTREDGVKGRRETNTMPQWAGSSWYYLRYIDPHNDEQLADKDLLKQWLPVDIYIGGAEHAVLHLLYARFWHKVLYDLGVVPTKEPFQKLFNQGMILGTSYRDHRGALVATDKVDKRDGSFFHMETGEELEQAPAKMSKSLKNVVNPDDVVEQYGADTLRVYEMFMGPLDASIAWSEEGLEGARKFLDRVYRLITTKEIVAENSGALDKAYHETVKAVTEQIEGMKFNTAIAQLMIFVNAANKEDELYVAYAKGFVQLLAPFAPHLGEELWQILTASGQSISYVAWPTHDDSKLVENDVEIVVQIKGKVKAKLVVAKDLSREELEKVALAHDKIQAEIAGKEVAKVIVVPNKLVNIVVK</sequence>
<reference key="1">
    <citation type="journal article" date="2009" name="PLoS Pathog.">
        <title>Genomic evidence for the evolution of Streptococcus equi: host restriction, increased virulence, and genetic exchange with human pathogens.</title>
        <authorList>
            <person name="Holden M.T.G."/>
            <person name="Heather Z."/>
            <person name="Paillot R."/>
            <person name="Steward K.F."/>
            <person name="Webb K."/>
            <person name="Ainslie F."/>
            <person name="Jourdan T."/>
            <person name="Bason N.C."/>
            <person name="Holroyd N.E."/>
            <person name="Mungall K."/>
            <person name="Quail M.A."/>
            <person name="Sanders M."/>
            <person name="Simmonds M."/>
            <person name="Willey D."/>
            <person name="Brooks K."/>
            <person name="Aanensen D.M."/>
            <person name="Spratt B.G."/>
            <person name="Jolley K.A."/>
            <person name="Maiden M.C.J."/>
            <person name="Kehoe M."/>
            <person name="Chanter N."/>
            <person name="Bentley S.D."/>
            <person name="Robinson C."/>
            <person name="Maskell D.J."/>
            <person name="Parkhill J."/>
            <person name="Waller A.S."/>
        </authorList>
    </citation>
    <scope>NUCLEOTIDE SEQUENCE [LARGE SCALE GENOMIC DNA]</scope>
    <source>
        <strain>4047</strain>
    </source>
</reference>
<proteinExistence type="inferred from homology"/>
<protein>
    <recommendedName>
        <fullName evidence="1">Leucine--tRNA ligase</fullName>
        <ecNumber evidence="1">6.1.1.4</ecNumber>
    </recommendedName>
    <alternativeName>
        <fullName evidence="1">Leucyl-tRNA synthetase</fullName>
        <shortName evidence="1">LeuRS</shortName>
    </alternativeName>
</protein>
<accession>C0M8N3</accession>
<evidence type="ECO:0000255" key="1">
    <source>
        <dbReference type="HAMAP-Rule" id="MF_00049"/>
    </source>
</evidence>
<dbReference type="EC" id="6.1.1.4" evidence="1"/>
<dbReference type="EMBL" id="FM204883">
    <property type="protein sequence ID" value="CAW92273.1"/>
    <property type="molecule type" value="Genomic_DNA"/>
</dbReference>
<dbReference type="RefSeq" id="WP_012678913.1">
    <property type="nucleotide sequence ID" value="NC_012471.1"/>
</dbReference>
<dbReference type="SMR" id="C0M8N3"/>
<dbReference type="KEGG" id="seu:SEQ_0234"/>
<dbReference type="HOGENOM" id="CLU_004427_0_0_9"/>
<dbReference type="OrthoDB" id="9810365at2"/>
<dbReference type="Proteomes" id="UP000001365">
    <property type="component" value="Chromosome"/>
</dbReference>
<dbReference type="GO" id="GO:0005829">
    <property type="term" value="C:cytosol"/>
    <property type="evidence" value="ECO:0007669"/>
    <property type="project" value="TreeGrafter"/>
</dbReference>
<dbReference type="GO" id="GO:0002161">
    <property type="term" value="F:aminoacyl-tRNA deacylase activity"/>
    <property type="evidence" value="ECO:0007669"/>
    <property type="project" value="InterPro"/>
</dbReference>
<dbReference type="GO" id="GO:0005524">
    <property type="term" value="F:ATP binding"/>
    <property type="evidence" value="ECO:0007669"/>
    <property type="project" value="UniProtKB-UniRule"/>
</dbReference>
<dbReference type="GO" id="GO:0004823">
    <property type="term" value="F:leucine-tRNA ligase activity"/>
    <property type="evidence" value="ECO:0007669"/>
    <property type="project" value="UniProtKB-UniRule"/>
</dbReference>
<dbReference type="GO" id="GO:0006429">
    <property type="term" value="P:leucyl-tRNA aminoacylation"/>
    <property type="evidence" value="ECO:0007669"/>
    <property type="project" value="UniProtKB-UniRule"/>
</dbReference>
<dbReference type="CDD" id="cd07958">
    <property type="entry name" value="Anticodon_Ia_Leu_BEm"/>
    <property type="match status" value="1"/>
</dbReference>
<dbReference type="CDD" id="cd00812">
    <property type="entry name" value="LeuRS_core"/>
    <property type="match status" value="1"/>
</dbReference>
<dbReference type="FunFam" id="1.10.730.10:FF:000012">
    <property type="entry name" value="Leucine--tRNA ligase"/>
    <property type="match status" value="1"/>
</dbReference>
<dbReference type="FunFam" id="3.40.50.620:FF:000056">
    <property type="entry name" value="Leucine--tRNA ligase"/>
    <property type="match status" value="1"/>
</dbReference>
<dbReference type="FunFam" id="3.40.50.620:FF:000077">
    <property type="entry name" value="Leucine--tRNA ligase"/>
    <property type="match status" value="1"/>
</dbReference>
<dbReference type="FunFam" id="1.10.730.10:FF:000011">
    <property type="entry name" value="Leucine--tRNA ligase chloroplastic/mitochondrial"/>
    <property type="match status" value="1"/>
</dbReference>
<dbReference type="Gene3D" id="3.40.50.620">
    <property type="entry name" value="HUPs"/>
    <property type="match status" value="2"/>
</dbReference>
<dbReference type="Gene3D" id="1.10.730.10">
    <property type="entry name" value="Isoleucyl-tRNA Synthetase, Domain 1"/>
    <property type="match status" value="1"/>
</dbReference>
<dbReference type="Gene3D" id="3.90.740.10">
    <property type="entry name" value="Valyl/Leucyl/Isoleucyl-tRNA synthetase, editing domain"/>
    <property type="match status" value="1"/>
</dbReference>
<dbReference type="HAMAP" id="MF_00049_B">
    <property type="entry name" value="Leu_tRNA_synth_B"/>
    <property type="match status" value="1"/>
</dbReference>
<dbReference type="InterPro" id="IPR001412">
    <property type="entry name" value="aa-tRNA-synth_I_CS"/>
</dbReference>
<dbReference type="InterPro" id="IPR002300">
    <property type="entry name" value="aa-tRNA-synth_Ia"/>
</dbReference>
<dbReference type="InterPro" id="IPR002302">
    <property type="entry name" value="Leu-tRNA-ligase"/>
</dbReference>
<dbReference type="InterPro" id="IPR025709">
    <property type="entry name" value="Leu_tRNA-synth_edit"/>
</dbReference>
<dbReference type="InterPro" id="IPR013155">
    <property type="entry name" value="M/V/L/I-tRNA-synth_anticd-bd"/>
</dbReference>
<dbReference type="InterPro" id="IPR015413">
    <property type="entry name" value="Methionyl/Leucyl_tRNA_Synth"/>
</dbReference>
<dbReference type="InterPro" id="IPR014729">
    <property type="entry name" value="Rossmann-like_a/b/a_fold"/>
</dbReference>
<dbReference type="InterPro" id="IPR009080">
    <property type="entry name" value="tRNAsynth_Ia_anticodon-bd"/>
</dbReference>
<dbReference type="InterPro" id="IPR009008">
    <property type="entry name" value="Val/Leu/Ile-tRNA-synth_edit"/>
</dbReference>
<dbReference type="NCBIfam" id="TIGR00396">
    <property type="entry name" value="leuS_bact"/>
    <property type="match status" value="1"/>
</dbReference>
<dbReference type="PANTHER" id="PTHR43740:SF2">
    <property type="entry name" value="LEUCINE--TRNA LIGASE, MITOCHONDRIAL"/>
    <property type="match status" value="1"/>
</dbReference>
<dbReference type="PANTHER" id="PTHR43740">
    <property type="entry name" value="LEUCYL-TRNA SYNTHETASE"/>
    <property type="match status" value="1"/>
</dbReference>
<dbReference type="Pfam" id="PF08264">
    <property type="entry name" value="Anticodon_1"/>
    <property type="match status" value="1"/>
</dbReference>
<dbReference type="Pfam" id="PF00133">
    <property type="entry name" value="tRNA-synt_1"/>
    <property type="match status" value="2"/>
</dbReference>
<dbReference type="Pfam" id="PF13603">
    <property type="entry name" value="tRNA-synt_1_2"/>
    <property type="match status" value="1"/>
</dbReference>
<dbReference type="Pfam" id="PF09334">
    <property type="entry name" value="tRNA-synt_1g"/>
    <property type="match status" value="1"/>
</dbReference>
<dbReference type="PRINTS" id="PR00985">
    <property type="entry name" value="TRNASYNTHLEU"/>
</dbReference>
<dbReference type="SUPFAM" id="SSF47323">
    <property type="entry name" value="Anticodon-binding domain of a subclass of class I aminoacyl-tRNA synthetases"/>
    <property type="match status" value="1"/>
</dbReference>
<dbReference type="SUPFAM" id="SSF52374">
    <property type="entry name" value="Nucleotidylyl transferase"/>
    <property type="match status" value="1"/>
</dbReference>
<dbReference type="SUPFAM" id="SSF50677">
    <property type="entry name" value="ValRS/IleRS/LeuRS editing domain"/>
    <property type="match status" value="1"/>
</dbReference>
<dbReference type="PROSITE" id="PS00178">
    <property type="entry name" value="AA_TRNA_LIGASE_I"/>
    <property type="match status" value="1"/>
</dbReference>